<name>CYNS_ECO24</name>
<gene>
    <name evidence="1" type="primary">cynS</name>
    <name type="ordered locus">EcE24377A_0365</name>
</gene>
<sequence>MIQSQINRNIRLDLADAILLSKAKKDLSFAEIADGTGLAEAFVTAALLGQQALPADAARLVGAKLDLDEDAILLLQMIPLRGCIDDRIPTDPTMYRFYEMLQVYGTTLKALVHEKFGDGIISAINFKLDVKKVADPEGGERAVITLDGKYLPTKPF</sequence>
<organism>
    <name type="scientific">Escherichia coli O139:H28 (strain E24377A / ETEC)</name>
    <dbReference type="NCBI Taxonomy" id="331111"/>
    <lineage>
        <taxon>Bacteria</taxon>
        <taxon>Pseudomonadati</taxon>
        <taxon>Pseudomonadota</taxon>
        <taxon>Gammaproteobacteria</taxon>
        <taxon>Enterobacterales</taxon>
        <taxon>Enterobacteriaceae</taxon>
        <taxon>Escherichia</taxon>
    </lineage>
</organism>
<proteinExistence type="inferred from homology"/>
<feature type="chain" id="PRO_1000061026" description="Cyanate hydratase">
    <location>
        <begin position="1"/>
        <end position="156"/>
    </location>
</feature>
<feature type="active site" evidence="1">
    <location>
        <position position="96"/>
    </location>
</feature>
<feature type="active site" evidence="1">
    <location>
        <position position="99"/>
    </location>
</feature>
<feature type="active site" evidence="1">
    <location>
        <position position="122"/>
    </location>
</feature>
<evidence type="ECO:0000255" key="1">
    <source>
        <dbReference type="HAMAP-Rule" id="MF_00535"/>
    </source>
</evidence>
<protein>
    <recommendedName>
        <fullName evidence="1">Cyanate hydratase</fullName>
        <shortName evidence="1">Cyanase</shortName>
        <ecNumber evidence="1">4.2.1.104</ecNumber>
    </recommendedName>
    <alternativeName>
        <fullName evidence="1">Cyanate hydrolase</fullName>
    </alternativeName>
    <alternativeName>
        <fullName evidence="1">Cyanate lyase</fullName>
    </alternativeName>
</protein>
<keyword id="KW-0456">Lyase</keyword>
<keyword id="KW-1185">Reference proteome</keyword>
<accession>A7ZI88</accession>
<dbReference type="EC" id="4.2.1.104" evidence="1"/>
<dbReference type="EMBL" id="CP000800">
    <property type="protein sequence ID" value="ABV19490.1"/>
    <property type="molecule type" value="Genomic_DNA"/>
</dbReference>
<dbReference type="RefSeq" id="WP_000616241.1">
    <property type="nucleotide sequence ID" value="NC_009801.1"/>
</dbReference>
<dbReference type="SMR" id="A7ZI88"/>
<dbReference type="GeneID" id="75202503"/>
<dbReference type="KEGG" id="ecw:EcE24377A_0365"/>
<dbReference type="HOGENOM" id="CLU_103452_1_1_6"/>
<dbReference type="Proteomes" id="UP000001122">
    <property type="component" value="Chromosome"/>
</dbReference>
<dbReference type="GO" id="GO:0008824">
    <property type="term" value="F:cyanate hydratase activity"/>
    <property type="evidence" value="ECO:0007669"/>
    <property type="project" value="UniProtKB-UniRule"/>
</dbReference>
<dbReference type="GO" id="GO:0003677">
    <property type="term" value="F:DNA binding"/>
    <property type="evidence" value="ECO:0007669"/>
    <property type="project" value="InterPro"/>
</dbReference>
<dbReference type="GO" id="GO:0009439">
    <property type="term" value="P:cyanate metabolic process"/>
    <property type="evidence" value="ECO:0007669"/>
    <property type="project" value="UniProtKB-UniRule"/>
</dbReference>
<dbReference type="CDD" id="cd00559">
    <property type="entry name" value="Cyanase_C"/>
    <property type="match status" value="1"/>
</dbReference>
<dbReference type="FunFam" id="3.30.1160.10:FF:000001">
    <property type="entry name" value="Cyanate hydratase"/>
    <property type="match status" value="1"/>
</dbReference>
<dbReference type="Gene3D" id="3.30.1160.10">
    <property type="entry name" value="Cyanate lyase, C-terminal domain"/>
    <property type="match status" value="1"/>
</dbReference>
<dbReference type="Gene3D" id="1.10.260.40">
    <property type="entry name" value="lambda repressor-like DNA-binding domains"/>
    <property type="match status" value="1"/>
</dbReference>
<dbReference type="HAMAP" id="MF_00535">
    <property type="entry name" value="Cyanate_hydrat"/>
    <property type="match status" value="1"/>
</dbReference>
<dbReference type="InterPro" id="IPR008076">
    <property type="entry name" value="Cyanase"/>
</dbReference>
<dbReference type="InterPro" id="IPR003712">
    <property type="entry name" value="Cyanate_lyase_C"/>
</dbReference>
<dbReference type="InterPro" id="IPR036581">
    <property type="entry name" value="Cyanate_lyase_C_sf"/>
</dbReference>
<dbReference type="InterPro" id="IPR048564">
    <property type="entry name" value="CYNS_N"/>
</dbReference>
<dbReference type="InterPro" id="IPR010982">
    <property type="entry name" value="Lambda_DNA-bd_dom_sf"/>
</dbReference>
<dbReference type="NCBIfam" id="TIGR00673">
    <property type="entry name" value="cynS"/>
    <property type="match status" value="1"/>
</dbReference>
<dbReference type="NCBIfam" id="NF002773">
    <property type="entry name" value="PRK02866.1"/>
    <property type="match status" value="1"/>
</dbReference>
<dbReference type="PANTHER" id="PTHR34186">
    <property type="entry name" value="CYANATE HYDRATASE"/>
    <property type="match status" value="1"/>
</dbReference>
<dbReference type="PANTHER" id="PTHR34186:SF2">
    <property type="entry name" value="CYANATE HYDRATASE"/>
    <property type="match status" value="1"/>
</dbReference>
<dbReference type="Pfam" id="PF02560">
    <property type="entry name" value="Cyanate_lyase"/>
    <property type="match status" value="1"/>
</dbReference>
<dbReference type="Pfam" id="PF21291">
    <property type="entry name" value="CYNS_N"/>
    <property type="match status" value="1"/>
</dbReference>
<dbReference type="PIRSF" id="PIRSF001263">
    <property type="entry name" value="Cyanate_hydratas"/>
    <property type="match status" value="1"/>
</dbReference>
<dbReference type="PRINTS" id="PR01693">
    <property type="entry name" value="CYANASE"/>
</dbReference>
<dbReference type="SMART" id="SM01116">
    <property type="entry name" value="Cyanate_lyase"/>
    <property type="match status" value="1"/>
</dbReference>
<dbReference type="SUPFAM" id="SSF55234">
    <property type="entry name" value="Cyanase C-terminal domain"/>
    <property type="match status" value="1"/>
</dbReference>
<dbReference type="SUPFAM" id="SSF47413">
    <property type="entry name" value="lambda repressor-like DNA-binding domains"/>
    <property type="match status" value="1"/>
</dbReference>
<comment type="function">
    <text evidence="1">Catalyzes the reaction of cyanate with bicarbonate to produce ammonia and carbon dioxide.</text>
</comment>
<comment type="catalytic activity">
    <reaction evidence="1">
        <text>cyanate + hydrogencarbonate + 3 H(+) = NH4(+) + 2 CO2</text>
        <dbReference type="Rhea" id="RHEA:11120"/>
        <dbReference type="ChEBI" id="CHEBI:15378"/>
        <dbReference type="ChEBI" id="CHEBI:16526"/>
        <dbReference type="ChEBI" id="CHEBI:17544"/>
        <dbReference type="ChEBI" id="CHEBI:28938"/>
        <dbReference type="ChEBI" id="CHEBI:29195"/>
        <dbReference type="EC" id="4.2.1.104"/>
    </reaction>
</comment>
<comment type="similarity">
    <text evidence="1">Belongs to the cyanase family.</text>
</comment>
<reference key="1">
    <citation type="journal article" date="2008" name="J. Bacteriol.">
        <title>The pangenome structure of Escherichia coli: comparative genomic analysis of E. coli commensal and pathogenic isolates.</title>
        <authorList>
            <person name="Rasko D.A."/>
            <person name="Rosovitz M.J."/>
            <person name="Myers G.S.A."/>
            <person name="Mongodin E.F."/>
            <person name="Fricke W.F."/>
            <person name="Gajer P."/>
            <person name="Crabtree J."/>
            <person name="Sebaihia M."/>
            <person name="Thomson N.R."/>
            <person name="Chaudhuri R."/>
            <person name="Henderson I.R."/>
            <person name="Sperandio V."/>
            <person name="Ravel J."/>
        </authorList>
    </citation>
    <scope>NUCLEOTIDE SEQUENCE [LARGE SCALE GENOMIC DNA]</scope>
    <source>
        <strain>E24377A / ETEC</strain>
    </source>
</reference>